<reference key="1">
    <citation type="journal article" date="2007" name="J. Bacteriol.">
        <title>Genome sequence analysis of the emerging human pathogenic acetic acid bacterium Granulibacter bethesdensis.</title>
        <authorList>
            <person name="Greenberg D.E."/>
            <person name="Porcella S.F."/>
            <person name="Zelazny A.M."/>
            <person name="Virtaneva K."/>
            <person name="Sturdevant D.E."/>
            <person name="Kupko J.J. III"/>
            <person name="Barbian K.D."/>
            <person name="Babar A."/>
            <person name="Dorward D.W."/>
            <person name="Holland S.M."/>
        </authorList>
    </citation>
    <scope>NUCLEOTIDE SEQUENCE [LARGE SCALE GENOMIC DNA]</scope>
    <source>
        <strain>ATCC BAA-1260 / CGDNIH1</strain>
    </source>
</reference>
<gene>
    <name evidence="1" type="primary">rpsJ</name>
    <name type="ordered locus">GbCGDNIH1_0553</name>
</gene>
<evidence type="ECO:0000255" key="1">
    <source>
        <dbReference type="HAMAP-Rule" id="MF_00508"/>
    </source>
</evidence>
<evidence type="ECO:0000305" key="2"/>
<proteinExistence type="inferred from homology"/>
<dbReference type="EMBL" id="CP000394">
    <property type="protein sequence ID" value="ABI61451.1"/>
    <property type="molecule type" value="Genomic_DNA"/>
</dbReference>
<dbReference type="RefSeq" id="WP_007282720.1">
    <property type="nucleotide sequence ID" value="NC_008343.2"/>
</dbReference>
<dbReference type="SMR" id="Q0BUQ1"/>
<dbReference type="STRING" id="391165.GbCGDNIH1_0553"/>
<dbReference type="GeneID" id="98313196"/>
<dbReference type="KEGG" id="gbe:GbCGDNIH1_0553"/>
<dbReference type="eggNOG" id="COG0051">
    <property type="taxonomic scope" value="Bacteria"/>
</dbReference>
<dbReference type="HOGENOM" id="CLU_122625_1_3_5"/>
<dbReference type="OrthoDB" id="9804464at2"/>
<dbReference type="Proteomes" id="UP000001963">
    <property type="component" value="Chromosome"/>
</dbReference>
<dbReference type="GO" id="GO:1990904">
    <property type="term" value="C:ribonucleoprotein complex"/>
    <property type="evidence" value="ECO:0007669"/>
    <property type="project" value="UniProtKB-KW"/>
</dbReference>
<dbReference type="GO" id="GO:0005840">
    <property type="term" value="C:ribosome"/>
    <property type="evidence" value="ECO:0007669"/>
    <property type="project" value="UniProtKB-KW"/>
</dbReference>
<dbReference type="GO" id="GO:0003735">
    <property type="term" value="F:structural constituent of ribosome"/>
    <property type="evidence" value="ECO:0007669"/>
    <property type="project" value="InterPro"/>
</dbReference>
<dbReference type="GO" id="GO:0000049">
    <property type="term" value="F:tRNA binding"/>
    <property type="evidence" value="ECO:0007669"/>
    <property type="project" value="UniProtKB-UniRule"/>
</dbReference>
<dbReference type="GO" id="GO:0006412">
    <property type="term" value="P:translation"/>
    <property type="evidence" value="ECO:0007669"/>
    <property type="project" value="UniProtKB-UniRule"/>
</dbReference>
<dbReference type="FunFam" id="3.30.70.600:FF:000001">
    <property type="entry name" value="30S ribosomal protein S10"/>
    <property type="match status" value="1"/>
</dbReference>
<dbReference type="Gene3D" id="3.30.70.600">
    <property type="entry name" value="Ribosomal protein S10 domain"/>
    <property type="match status" value="1"/>
</dbReference>
<dbReference type="HAMAP" id="MF_00508">
    <property type="entry name" value="Ribosomal_uS10"/>
    <property type="match status" value="1"/>
</dbReference>
<dbReference type="InterPro" id="IPR001848">
    <property type="entry name" value="Ribosomal_uS10"/>
</dbReference>
<dbReference type="InterPro" id="IPR018268">
    <property type="entry name" value="Ribosomal_uS10_CS"/>
</dbReference>
<dbReference type="InterPro" id="IPR027486">
    <property type="entry name" value="Ribosomal_uS10_dom"/>
</dbReference>
<dbReference type="InterPro" id="IPR036838">
    <property type="entry name" value="Ribosomal_uS10_dom_sf"/>
</dbReference>
<dbReference type="NCBIfam" id="NF001861">
    <property type="entry name" value="PRK00596.1"/>
    <property type="match status" value="1"/>
</dbReference>
<dbReference type="NCBIfam" id="TIGR01049">
    <property type="entry name" value="rpsJ_bact"/>
    <property type="match status" value="1"/>
</dbReference>
<dbReference type="PANTHER" id="PTHR11700">
    <property type="entry name" value="30S RIBOSOMAL PROTEIN S10 FAMILY MEMBER"/>
    <property type="match status" value="1"/>
</dbReference>
<dbReference type="Pfam" id="PF00338">
    <property type="entry name" value="Ribosomal_S10"/>
    <property type="match status" value="1"/>
</dbReference>
<dbReference type="PRINTS" id="PR00971">
    <property type="entry name" value="RIBOSOMALS10"/>
</dbReference>
<dbReference type="SMART" id="SM01403">
    <property type="entry name" value="Ribosomal_S10"/>
    <property type="match status" value="1"/>
</dbReference>
<dbReference type="SUPFAM" id="SSF54999">
    <property type="entry name" value="Ribosomal protein S10"/>
    <property type="match status" value="1"/>
</dbReference>
<dbReference type="PROSITE" id="PS00361">
    <property type="entry name" value="RIBOSOMAL_S10"/>
    <property type="match status" value="1"/>
</dbReference>
<feature type="chain" id="PRO_1000015028" description="Small ribosomal subunit protein uS10">
    <location>
        <begin position="1"/>
        <end position="102"/>
    </location>
</feature>
<organism>
    <name type="scientific">Granulibacter bethesdensis (strain ATCC BAA-1260 / CGDNIH1)</name>
    <dbReference type="NCBI Taxonomy" id="391165"/>
    <lineage>
        <taxon>Bacteria</taxon>
        <taxon>Pseudomonadati</taxon>
        <taxon>Pseudomonadota</taxon>
        <taxon>Alphaproteobacteria</taxon>
        <taxon>Acetobacterales</taxon>
        <taxon>Acetobacteraceae</taxon>
        <taxon>Granulibacter</taxon>
    </lineage>
</organism>
<keyword id="KW-1185">Reference proteome</keyword>
<keyword id="KW-0687">Ribonucleoprotein</keyword>
<keyword id="KW-0689">Ribosomal protein</keyword>
<protein>
    <recommendedName>
        <fullName evidence="1">Small ribosomal subunit protein uS10</fullName>
    </recommendedName>
    <alternativeName>
        <fullName evidence="2">30S ribosomal protein S10</fullName>
    </alternativeName>
</protein>
<accession>Q0BUQ1</accession>
<sequence length="102" mass="11775">MDNQNIRIRLKAYDHRVLDNSTKEIVNTAKRTGARVRGPIPLPTHIERFTVNRSPHVDKKSREQFEIRTHRRLLDIVEPTPQTVDALMKLDLAAGVDVEIKL</sequence>
<comment type="function">
    <text evidence="1">Involved in the binding of tRNA to the ribosomes.</text>
</comment>
<comment type="subunit">
    <text evidence="1">Part of the 30S ribosomal subunit.</text>
</comment>
<comment type="similarity">
    <text evidence="1">Belongs to the universal ribosomal protein uS10 family.</text>
</comment>
<name>RS10_GRABC</name>